<dbReference type="EMBL" id="CP000822">
    <property type="protein sequence ID" value="ABV14742.1"/>
    <property type="molecule type" value="Genomic_DNA"/>
</dbReference>
<dbReference type="RefSeq" id="WP_012134439.1">
    <property type="nucleotide sequence ID" value="NC_009792.1"/>
</dbReference>
<dbReference type="SMR" id="A8AMM9"/>
<dbReference type="STRING" id="290338.CKO_03663"/>
<dbReference type="GeneID" id="45137367"/>
<dbReference type="KEGG" id="cko:CKO_03663"/>
<dbReference type="HOGENOM" id="CLU_113688_2_1_6"/>
<dbReference type="OrthoDB" id="9799751at2"/>
<dbReference type="Proteomes" id="UP000008148">
    <property type="component" value="Chromosome"/>
</dbReference>
<dbReference type="GO" id="GO:0005829">
    <property type="term" value="C:cytosol"/>
    <property type="evidence" value="ECO:0007669"/>
    <property type="project" value="TreeGrafter"/>
</dbReference>
<dbReference type="GO" id="GO:0003723">
    <property type="term" value="F:RNA binding"/>
    <property type="evidence" value="ECO:0007669"/>
    <property type="project" value="UniProtKB-UniRule"/>
</dbReference>
<dbReference type="GO" id="GO:0006355">
    <property type="term" value="P:regulation of DNA-templated transcription"/>
    <property type="evidence" value="ECO:0007669"/>
    <property type="project" value="InterPro"/>
</dbReference>
<dbReference type="GO" id="GO:0043487">
    <property type="term" value="P:regulation of RNA stability"/>
    <property type="evidence" value="ECO:0007669"/>
    <property type="project" value="TreeGrafter"/>
</dbReference>
<dbReference type="GO" id="GO:0045974">
    <property type="term" value="P:regulation of translation, ncRNA-mediated"/>
    <property type="evidence" value="ECO:0007669"/>
    <property type="project" value="TreeGrafter"/>
</dbReference>
<dbReference type="CDD" id="cd01716">
    <property type="entry name" value="Hfq"/>
    <property type="match status" value="1"/>
</dbReference>
<dbReference type="FunFam" id="2.30.30.100:FF:000001">
    <property type="entry name" value="RNA-binding protein Hfq"/>
    <property type="match status" value="1"/>
</dbReference>
<dbReference type="Gene3D" id="2.30.30.100">
    <property type="match status" value="1"/>
</dbReference>
<dbReference type="HAMAP" id="MF_00436">
    <property type="entry name" value="Hfq"/>
    <property type="match status" value="1"/>
</dbReference>
<dbReference type="InterPro" id="IPR005001">
    <property type="entry name" value="Hfq"/>
</dbReference>
<dbReference type="InterPro" id="IPR010920">
    <property type="entry name" value="LSM_dom_sf"/>
</dbReference>
<dbReference type="InterPro" id="IPR047575">
    <property type="entry name" value="Sm"/>
</dbReference>
<dbReference type="NCBIfam" id="TIGR02383">
    <property type="entry name" value="Hfq"/>
    <property type="match status" value="1"/>
</dbReference>
<dbReference type="NCBIfam" id="NF001602">
    <property type="entry name" value="PRK00395.1"/>
    <property type="match status" value="1"/>
</dbReference>
<dbReference type="PANTHER" id="PTHR34772">
    <property type="entry name" value="RNA-BINDING PROTEIN HFQ"/>
    <property type="match status" value="1"/>
</dbReference>
<dbReference type="PANTHER" id="PTHR34772:SF1">
    <property type="entry name" value="RNA-BINDING PROTEIN HFQ"/>
    <property type="match status" value="1"/>
</dbReference>
<dbReference type="Pfam" id="PF17209">
    <property type="entry name" value="Hfq"/>
    <property type="match status" value="1"/>
</dbReference>
<dbReference type="SUPFAM" id="SSF50182">
    <property type="entry name" value="Sm-like ribonucleoproteins"/>
    <property type="match status" value="1"/>
</dbReference>
<dbReference type="PROSITE" id="PS52002">
    <property type="entry name" value="SM"/>
    <property type="match status" value="1"/>
</dbReference>
<keyword id="KW-1185">Reference proteome</keyword>
<keyword id="KW-0694">RNA-binding</keyword>
<keyword id="KW-0346">Stress response</keyword>
<reference key="1">
    <citation type="submission" date="2007-08" db="EMBL/GenBank/DDBJ databases">
        <authorList>
            <consortium name="The Citrobacter koseri Genome Sequencing Project"/>
            <person name="McClelland M."/>
            <person name="Sanderson E.K."/>
            <person name="Porwollik S."/>
            <person name="Spieth J."/>
            <person name="Clifton W.S."/>
            <person name="Latreille P."/>
            <person name="Courtney L."/>
            <person name="Wang C."/>
            <person name="Pepin K."/>
            <person name="Bhonagiri V."/>
            <person name="Nash W."/>
            <person name="Johnson M."/>
            <person name="Thiruvilangam P."/>
            <person name="Wilson R."/>
        </authorList>
    </citation>
    <scope>NUCLEOTIDE SEQUENCE [LARGE SCALE GENOMIC DNA]</scope>
    <source>
        <strain>ATCC BAA-895 / CDC 4225-83 / SGSC4696</strain>
    </source>
</reference>
<organism>
    <name type="scientific">Citrobacter koseri (strain ATCC BAA-895 / CDC 4225-83 / SGSC4696)</name>
    <dbReference type="NCBI Taxonomy" id="290338"/>
    <lineage>
        <taxon>Bacteria</taxon>
        <taxon>Pseudomonadati</taxon>
        <taxon>Pseudomonadota</taxon>
        <taxon>Gammaproteobacteria</taxon>
        <taxon>Enterobacterales</taxon>
        <taxon>Enterobacteriaceae</taxon>
        <taxon>Citrobacter</taxon>
    </lineage>
</organism>
<accession>A8AMM9</accession>
<name>HFQ_CITK8</name>
<gene>
    <name evidence="1" type="primary">hfq</name>
    <name type="ordered locus">CKO_03663</name>
</gene>
<feature type="chain" id="PRO_1000025901" description="RNA-binding protein Hfq">
    <location>
        <begin position="1"/>
        <end position="102"/>
    </location>
</feature>
<feature type="domain" description="Sm" evidence="2">
    <location>
        <begin position="9"/>
        <end position="68"/>
    </location>
</feature>
<feature type="region of interest" description="Disordered" evidence="3">
    <location>
        <begin position="63"/>
        <end position="102"/>
    </location>
</feature>
<feature type="compositionally biased region" description="Polar residues" evidence="3">
    <location>
        <begin position="70"/>
        <end position="96"/>
    </location>
</feature>
<sequence length="102" mass="11109">MAKGQSLQDPFLNALRRERVPVSIYLVNGIKLQGQIESFDQFVILLKNTVSQMVYKHAISTVVPSRPVSHHSNNAGGGTSSNYHHGSSAQGTSAQQDSEETE</sequence>
<protein>
    <recommendedName>
        <fullName evidence="1">RNA-binding protein Hfq</fullName>
    </recommendedName>
</protein>
<comment type="function">
    <text evidence="1">RNA chaperone that binds small regulatory RNA (sRNAs) and mRNAs to facilitate mRNA translational regulation in response to envelope stress, environmental stress and changes in metabolite concentrations. Also binds with high specificity to tRNAs.</text>
</comment>
<comment type="subunit">
    <text evidence="1">Homohexamer.</text>
</comment>
<comment type="similarity">
    <text evidence="1">Belongs to the Hfq family.</text>
</comment>
<evidence type="ECO:0000255" key="1">
    <source>
        <dbReference type="HAMAP-Rule" id="MF_00436"/>
    </source>
</evidence>
<evidence type="ECO:0000255" key="2">
    <source>
        <dbReference type="PROSITE-ProRule" id="PRU01346"/>
    </source>
</evidence>
<evidence type="ECO:0000256" key="3">
    <source>
        <dbReference type="SAM" id="MobiDB-lite"/>
    </source>
</evidence>
<proteinExistence type="inferred from homology"/>